<sequence length="214" mass="23653">MSGLSQRQQRIYDYIKQFIRTNGYAPAIRDIQRELSISSTSVVAYNLRALESKGHIRREGNISRAIELINAEQPLPTVLGGQRVPVLGVIAAGQPIPVPNDSANSDDSVLVPEEIVGNDKLGDVYALRVKGYSMVDALIADGDIVLLRYQATAENGEMVAARIRDENEVTLKRIYWEGDRVRLQPANVTMEAMYYPSTNVEVQGRVVGVIRNLG</sequence>
<dbReference type="EC" id="3.4.21.88" evidence="1"/>
<dbReference type="EMBL" id="CP000875">
    <property type="protein sequence ID" value="ABX02803.1"/>
    <property type="molecule type" value="Genomic_DNA"/>
</dbReference>
<dbReference type="SMR" id="A9B5H8"/>
<dbReference type="FunCoup" id="A9B5H8">
    <property type="interactions" value="294"/>
</dbReference>
<dbReference type="STRING" id="316274.Haur_0151"/>
<dbReference type="MEROPS" id="S24.001"/>
<dbReference type="KEGG" id="hau:Haur_0151"/>
<dbReference type="eggNOG" id="COG1974">
    <property type="taxonomic scope" value="Bacteria"/>
</dbReference>
<dbReference type="HOGENOM" id="CLU_066192_45_2_0"/>
<dbReference type="InParanoid" id="A9B5H8"/>
<dbReference type="Proteomes" id="UP000000787">
    <property type="component" value="Chromosome"/>
</dbReference>
<dbReference type="GO" id="GO:0003677">
    <property type="term" value="F:DNA binding"/>
    <property type="evidence" value="ECO:0007669"/>
    <property type="project" value="UniProtKB-UniRule"/>
</dbReference>
<dbReference type="GO" id="GO:0004252">
    <property type="term" value="F:serine-type endopeptidase activity"/>
    <property type="evidence" value="ECO:0007669"/>
    <property type="project" value="UniProtKB-UniRule"/>
</dbReference>
<dbReference type="GO" id="GO:0006281">
    <property type="term" value="P:DNA repair"/>
    <property type="evidence" value="ECO:0007669"/>
    <property type="project" value="UniProtKB-UniRule"/>
</dbReference>
<dbReference type="GO" id="GO:0006260">
    <property type="term" value="P:DNA replication"/>
    <property type="evidence" value="ECO:0007669"/>
    <property type="project" value="UniProtKB-UniRule"/>
</dbReference>
<dbReference type="GO" id="GO:0045892">
    <property type="term" value="P:negative regulation of DNA-templated transcription"/>
    <property type="evidence" value="ECO:0007669"/>
    <property type="project" value="UniProtKB-UniRule"/>
</dbReference>
<dbReference type="GO" id="GO:0006508">
    <property type="term" value="P:proteolysis"/>
    <property type="evidence" value="ECO:0007669"/>
    <property type="project" value="InterPro"/>
</dbReference>
<dbReference type="GO" id="GO:0009432">
    <property type="term" value="P:SOS response"/>
    <property type="evidence" value="ECO:0007669"/>
    <property type="project" value="UniProtKB-UniRule"/>
</dbReference>
<dbReference type="CDD" id="cd06529">
    <property type="entry name" value="S24_LexA-like"/>
    <property type="match status" value="1"/>
</dbReference>
<dbReference type="Gene3D" id="2.10.109.10">
    <property type="entry name" value="Umud Fragment, subunit A"/>
    <property type="match status" value="1"/>
</dbReference>
<dbReference type="Gene3D" id="1.10.10.10">
    <property type="entry name" value="Winged helix-like DNA-binding domain superfamily/Winged helix DNA-binding domain"/>
    <property type="match status" value="1"/>
</dbReference>
<dbReference type="HAMAP" id="MF_00015">
    <property type="entry name" value="LexA"/>
    <property type="match status" value="1"/>
</dbReference>
<dbReference type="InterPro" id="IPR006200">
    <property type="entry name" value="LexA"/>
</dbReference>
<dbReference type="InterPro" id="IPR039418">
    <property type="entry name" value="LexA-like"/>
</dbReference>
<dbReference type="InterPro" id="IPR036286">
    <property type="entry name" value="LexA/Signal_pep-like_sf"/>
</dbReference>
<dbReference type="InterPro" id="IPR006199">
    <property type="entry name" value="LexA_DNA-bd_dom"/>
</dbReference>
<dbReference type="InterPro" id="IPR050077">
    <property type="entry name" value="LexA_repressor"/>
</dbReference>
<dbReference type="InterPro" id="IPR006197">
    <property type="entry name" value="Peptidase_S24_LexA"/>
</dbReference>
<dbReference type="InterPro" id="IPR015927">
    <property type="entry name" value="Peptidase_S24_S26A/B/C"/>
</dbReference>
<dbReference type="InterPro" id="IPR036388">
    <property type="entry name" value="WH-like_DNA-bd_sf"/>
</dbReference>
<dbReference type="InterPro" id="IPR036390">
    <property type="entry name" value="WH_DNA-bd_sf"/>
</dbReference>
<dbReference type="NCBIfam" id="TIGR00498">
    <property type="entry name" value="lexA"/>
    <property type="match status" value="1"/>
</dbReference>
<dbReference type="PANTHER" id="PTHR33516">
    <property type="entry name" value="LEXA REPRESSOR"/>
    <property type="match status" value="1"/>
</dbReference>
<dbReference type="PANTHER" id="PTHR33516:SF2">
    <property type="entry name" value="LEXA REPRESSOR-RELATED"/>
    <property type="match status" value="1"/>
</dbReference>
<dbReference type="Pfam" id="PF01726">
    <property type="entry name" value="LexA_DNA_bind"/>
    <property type="match status" value="1"/>
</dbReference>
<dbReference type="Pfam" id="PF00717">
    <property type="entry name" value="Peptidase_S24"/>
    <property type="match status" value="1"/>
</dbReference>
<dbReference type="PRINTS" id="PR00726">
    <property type="entry name" value="LEXASERPTASE"/>
</dbReference>
<dbReference type="SUPFAM" id="SSF51306">
    <property type="entry name" value="LexA/Signal peptidase"/>
    <property type="match status" value="1"/>
</dbReference>
<dbReference type="SUPFAM" id="SSF46785">
    <property type="entry name" value="Winged helix' DNA-binding domain"/>
    <property type="match status" value="1"/>
</dbReference>
<protein>
    <recommendedName>
        <fullName evidence="1">LexA repressor</fullName>
        <ecNumber evidence="1">3.4.21.88</ecNumber>
    </recommendedName>
</protein>
<name>LEXA_HERA2</name>
<proteinExistence type="inferred from homology"/>
<organism>
    <name type="scientific">Herpetosiphon aurantiacus (strain ATCC 23779 / DSM 785 / 114-95)</name>
    <dbReference type="NCBI Taxonomy" id="316274"/>
    <lineage>
        <taxon>Bacteria</taxon>
        <taxon>Bacillati</taxon>
        <taxon>Chloroflexota</taxon>
        <taxon>Chloroflexia</taxon>
        <taxon>Herpetosiphonales</taxon>
        <taxon>Herpetosiphonaceae</taxon>
        <taxon>Herpetosiphon</taxon>
    </lineage>
</organism>
<comment type="function">
    <text evidence="1">Represses a number of genes involved in the response to DNA damage (SOS response), including recA and lexA. In the presence of single-stranded DNA, RecA interacts with LexA causing an autocatalytic cleavage which disrupts the DNA-binding part of LexA, leading to derepression of the SOS regulon and eventually DNA repair.</text>
</comment>
<comment type="catalytic activity">
    <reaction evidence="1">
        <text>Hydrolysis of Ala-|-Gly bond in repressor LexA.</text>
        <dbReference type="EC" id="3.4.21.88"/>
    </reaction>
</comment>
<comment type="subunit">
    <text evidence="1">Homodimer.</text>
</comment>
<comment type="similarity">
    <text evidence="1">Belongs to the peptidase S24 family.</text>
</comment>
<gene>
    <name evidence="1" type="primary">lexA</name>
    <name type="ordered locus">Haur_0151</name>
</gene>
<evidence type="ECO:0000255" key="1">
    <source>
        <dbReference type="HAMAP-Rule" id="MF_00015"/>
    </source>
</evidence>
<reference key="1">
    <citation type="journal article" date="2011" name="Stand. Genomic Sci.">
        <title>Complete genome sequence of the filamentous gliding predatory bacterium Herpetosiphon aurantiacus type strain (114-95(T)).</title>
        <authorList>
            <person name="Kiss H."/>
            <person name="Nett M."/>
            <person name="Domin N."/>
            <person name="Martin K."/>
            <person name="Maresca J.A."/>
            <person name="Copeland A."/>
            <person name="Lapidus A."/>
            <person name="Lucas S."/>
            <person name="Berry K.W."/>
            <person name="Glavina Del Rio T."/>
            <person name="Dalin E."/>
            <person name="Tice H."/>
            <person name="Pitluck S."/>
            <person name="Richardson P."/>
            <person name="Bruce D."/>
            <person name="Goodwin L."/>
            <person name="Han C."/>
            <person name="Detter J.C."/>
            <person name="Schmutz J."/>
            <person name="Brettin T."/>
            <person name="Land M."/>
            <person name="Hauser L."/>
            <person name="Kyrpides N.C."/>
            <person name="Ivanova N."/>
            <person name="Goeker M."/>
            <person name="Woyke T."/>
            <person name="Klenk H.P."/>
            <person name="Bryant D.A."/>
        </authorList>
    </citation>
    <scope>NUCLEOTIDE SEQUENCE [LARGE SCALE GENOMIC DNA]</scope>
    <source>
        <strain>ATCC 23779 / DSM 785 / 114-95</strain>
    </source>
</reference>
<keyword id="KW-0068">Autocatalytic cleavage</keyword>
<keyword id="KW-0227">DNA damage</keyword>
<keyword id="KW-0234">DNA repair</keyword>
<keyword id="KW-0235">DNA replication</keyword>
<keyword id="KW-0238">DNA-binding</keyword>
<keyword id="KW-0378">Hydrolase</keyword>
<keyword id="KW-0678">Repressor</keyword>
<keyword id="KW-0742">SOS response</keyword>
<keyword id="KW-0804">Transcription</keyword>
<keyword id="KW-0805">Transcription regulation</keyword>
<feature type="chain" id="PRO_1000089569" description="LexA repressor">
    <location>
        <begin position="1"/>
        <end position="214"/>
    </location>
</feature>
<feature type="DNA-binding region" description="H-T-H motif" evidence="1">
    <location>
        <begin position="28"/>
        <end position="48"/>
    </location>
</feature>
<feature type="active site" description="For autocatalytic cleavage activity" evidence="1">
    <location>
        <position position="133"/>
    </location>
</feature>
<feature type="active site" description="For autocatalytic cleavage activity" evidence="1">
    <location>
        <position position="172"/>
    </location>
</feature>
<feature type="site" description="Cleavage; by autolysis" evidence="1">
    <location>
        <begin position="92"/>
        <end position="93"/>
    </location>
</feature>
<accession>A9B5H8</accession>